<name>FABH_NITEU</name>
<proteinExistence type="inferred from homology"/>
<keyword id="KW-0012">Acyltransferase</keyword>
<keyword id="KW-0963">Cytoplasm</keyword>
<keyword id="KW-0275">Fatty acid biosynthesis</keyword>
<keyword id="KW-0276">Fatty acid metabolism</keyword>
<keyword id="KW-0444">Lipid biosynthesis</keyword>
<keyword id="KW-0443">Lipid metabolism</keyword>
<keyword id="KW-0511">Multifunctional enzyme</keyword>
<keyword id="KW-1185">Reference proteome</keyword>
<keyword id="KW-0808">Transferase</keyword>
<reference key="1">
    <citation type="journal article" date="2003" name="J. Bacteriol.">
        <title>Complete genome sequence of the ammonia-oxidizing bacterium and obligate chemolithoautotroph Nitrosomonas europaea.</title>
        <authorList>
            <person name="Chain P."/>
            <person name="Lamerdin J.E."/>
            <person name="Larimer F.W."/>
            <person name="Regala W."/>
            <person name="Lao V."/>
            <person name="Land M.L."/>
            <person name="Hauser L."/>
            <person name="Hooper A.B."/>
            <person name="Klotz M.G."/>
            <person name="Norton J."/>
            <person name="Sayavedra-Soto L.A."/>
            <person name="Arciero D.M."/>
            <person name="Hommes N.G."/>
            <person name="Whittaker M.M."/>
            <person name="Arp D.J."/>
        </authorList>
    </citation>
    <scope>NUCLEOTIDE SEQUENCE [LARGE SCALE GENOMIC DNA]</scope>
    <source>
        <strain>ATCC 19718 / CIP 103999 / KCTC 2705 / NBRC 14298</strain>
    </source>
</reference>
<organism>
    <name type="scientific">Nitrosomonas europaea (strain ATCC 19718 / CIP 103999 / KCTC 2705 / NBRC 14298)</name>
    <dbReference type="NCBI Taxonomy" id="228410"/>
    <lineage>
        <taxon>Bacteria</taxon>
        <taxon>Pseudomonadati</taxon>
        <taxon>Pseudomonadota</taxon>
        <taxon>Betaproteobacteria</taxon>
        <taxon>Nitrosomonadales</taxon>
        <taxon>Nitrosomonadaceae</taxon>
        <taxon>Nitrosomonas</taxon>
    </lineage>
</organism>
<evidence type="ECO:0000255" key="1">
    <source>
        <dbReference type="HAMAP-Rule" id="MF_01815"/>
    </source>
</evidence>
<accession>Q82U60</accession>
<comment type="function">
    <text evidence="1">Catalyzes the condensation reaction of fatty acid synthesis by the addition to an acyl acceptor of two carbons from malonyl-ACP. Catalyzes the first condensation reaction which initiates fatty acid synthesis and may therefore play a role in governing the total rate of fatty acid production. Possesses both acetoacetyl-ACP synthase and acetyl transacylase activities. Its substrate specificity determines the biosynthesis of branched-chain and/or straight-chain of fatty acids.</text>
</comment>
<comment type="catalytic activity">
    <reaction evidence="1">
        <text>malonyl-[ACP] + acetyl-CoA + H(+) = 3-oxobutanoyl-[ACP] + CO2 + CoA</text>
        <dbReference type="Rhea" id="RHEA:12080"/>
        <dbReference type="Rhea" id="RHEA-COMP:9623"/>
        <dbReference type="Rhea" id="RHEA-COMP:9625"/>
        <dbReference type="ChEBI" id="CHEBI:15378"/>
        <dbReference type="ChEBI" id="CHEBI:16526"/>
        <dbReference type="ChEBI" id="CHEBI:57287"/>
        <dbReference type="ChEBI" id="CHEBI:57288"/>
        <dbReference type="ChEBI" id="CHEBI:78449"/>
        <dbReference type="ChEBI" id="CHEBI:78450"/>
        <dbReference type="EC" id="2.3.1.180"/>
    </reaction>
</comment>
<comment type="pathway">
    <text evidence="1">Lipid metabolism; fatty acid biosynthesis.</text>
</comment>
<comment type="subunit">
    <text evidence="1">Homodimer.</text>
</comment>
<comment type="subcellular location">
    <subcellularLocation>
        <location evidence="1">Cytoplasm</location>
    </subcellularLocation>
</comment>
<comment type="domain">
    <text evidence="1">The last Arg residue of the ACP-binding site is essential for the weak association between ACP/AcpP and FabH.</text>
</comment>
<comment type="similarity">
    <text evidence="1">Belongs to the thiolase-like superfamily. FabH family.</text>
</comment>
<dbReference type="EC" id="2.3.1.180" evidence="1"/>
<dbReference type="EMBL" id="AL954747">
    <property type="protein sequence ID" value="CAD85557.1"/>
    <property type="molecule type" value="Genomic_DNA"/>
</dbReference>
<dbReference type="SMR" id="Q82U60"/>
<dbReference type="STRING" id="228410.NE1646"/>
<dbReference type="KEGG" id="neu:NE1646"/>
<dbReference type="eggNOG" id="COG0332">
    <property type="taxonomic scope" value="Bacteria"/>
</dbReference>
<dbReference type="HOGENOM" id="CLU_039592_3_1_4"/>
<dbReference type="OrthoDB" id="9815506at2"/>
<dbReference type="PhylomeDB" id="Q82U60"/>
<dbReference type="UniPathway" id="UPA00094"/>
<dbReference type="Proteomes" id="UP000001416">
    <property type="component" value="Chromosome"/>
</dbReference>
<dbReference type="GO" id="GO:0005737">
    <property type="term" value="C:cytoplasm"/>
    <property type="evidence" value="ECO:0007669"/>
    <property type="project" value="UniProtKB-SubCell"/>
</dbReference>
<dbReference type="GO" id="GO:0004315">
    <property type="term" value="F:3-oxoacyl-[acyl-carrier-protein] synthase activity"/>
    <property type="evidence" value="ECO:0007669"/>
    <property type="project" value="InterPro"/>
</dbReference>
<dbReference type="GO" id="GO:0033818">
    <property type="term" value="F:beta-ketoacyl-acyl-carrier-protein synthase III activity"/>
    <property type="evidence" value="ECO:0007669"/>
    <property type="project" value="UniProtKB-UniRule"/>
</dbReference>
<dbReference type="GO" id="GO:0006633">
    <property type="term" value="P:fatty acid biosynthetic process"/>
    <property type="evidence" value="ECO:0007669"/>
    <property type="project" value="UniProtKB-UniRule"/>
</dbReference>
<dbReference type="CDD" id="cd00830">
    <property type="entry name" value="KAS_III"/>
    <property type="match status" value="1"/>
</dbReference>
<dbReference type="FunFam" id="3.40.47.10:FF:000004">
    <property type="entry name" value="3-oxoacyl-[acyl-carrier-protein] synthase 3"/>
    <property type="match status" value="1"/>
</dbReference>
<dbReference type="Gene3D" id="3.40.47.10">
    <property type="match status" value="1"/>
</dbReference>
<dbReference type="HAMAP" id="MF_01815">
    <property type="entry name" value="FabH"/>
    <property type="match status" value="1"/>
</dbReference>
<dbReference type="InterPro" id="IPR013747">
    <property type="entry name" value="ACP_syn_III_C"/>
</dbReference>
<dbReference type="InterPro" id="IPR013751">
    <property type="entry name" value="ACP_syn_III_N"/>
</dbReference>
<dbReference type="InterPro" id="IPR004655">
    <property type="entry name" value="FabH"/>
</dbReference>
<dbReference type="InterPro" id="IPR016039">
    <property type="entry name" value="Thiolase-like"/>
</dbReference>
<dbReference type="NCBIfam" id="TIGR00747">
    <property type="entry name" value="fabH"/>
    <property type="match status" value="1"/>
</dbReference>
<dbReference type="NCBIfam" id="NF006829">
    <property type="entry name" value="PRK09352.1"/>
    <property type="match status" value="1"/>
</dbReference>
<dbReference type="PANTHER" id="PTHR43091">
    <property type="entry name" value="3-OXOACYL-[ACYL-CARRIER-PROTEIN] SYNTHASE"/>
    <property type="match status" value="1"/>
</dbReference>
<dbReference type="PANTHER" id="PTHR43091:SF1">
    <property type="entry name" value="BETA-KETOACYL-[ACYL-CARRIER-PROTEIN] SYNTHASE III, CHLOROPLASTIC"/>
    <property type="match status" value="1"/>
</dbReference>
<dbReference type="Pfam" id="PF08545">
    <property type="entry name" value="ACP_syn_III"/>
    <property type="match status" value="1"/>
</dbReference>
<dbReference type="Pfam" id="PF08541">
    <property type="entry name" value="ACP_syn_III_C"/>
    <property type="match status" value="1"/>
</dbReference>
<dbReference type="SUPFAM" id="SSF53901">
    <property type="entry name" value="Thiolase-like"/>
    <property type="match status" value="1"/>
</dbReference>
<protein>
    <recommendedName>
        <fullName evidence="1">Beta-ketoacyl-[acyl-carrier-protein] synthase III</fullName>
        <shortName evidence="1">Beta-ketoacyl-ACP synthase III</shortName>
        <shortName evidence="1">KAS III</shortName>
        <ecNumber evidence="1">2.3.1.180</ecNumber>
    </recommendedName>
    <alternativeName>
        <fullName evidence="1">3-oxoacyl-[acyl-carrier-protein] synthase 3</fullName>
    </alternativeName>
    <alternativeName>
        <fullName evidence="1">3-oxoacyl-[acyl-carrier-protein] synthase III</fullName>
    </alternativeName>
</protein>
<feature type="chain" id="PRO_0000110447" description="Beta-ketoacyl-[acyl-carrier-protein] synthase III">
    <location>
        <begin position="1"/>
        <end position="318"/>
    </location>
</feature>
<feature type="region of interest" description="ACP-binding" evidence="1">
    <location>
        <begin position="246"/>
        <end position="250"/>
    </location>
</feature>
<feature type="active site" evidence="1">
    <location>
        <position position="112"/>
    </location>
</feature>
<feature type="active site" evidence="1">
    <location>
        <position position="245"/>
    </location>
</feature>
<feature type="active site" evidence="1">
    <location>
        <position position="275"/>
    </location>
</feature>
<sequence>MYSRIIGTGSYLPEKVLTNQDLESMVDTSDEWIRTRTGIERRHIAAEGQMASDLALEASRNAIEAADIQAKDIDLIIVATTTPDMIFPSTACILQNKLGMSNGPAFDVQAVCSGFIYALATADMFVSSGKARNALVVGAEVYSRIMDWNDRSTCVLFGDGAGAVILTRDQKPGILSSHLHADGSYSQVLTAPASIHSGKIQGTPFITMEGGTVFKFAVKVLEEAALEALQANQLQPSDIDWLIPHQANIRIITSTAKKLGIPEEKVVATVSQHGNTSAASVPLALDQAVRDGRIQPDQHIVLEGVGGGFTWGSVLVRW</sequence>
<gene>
    <name evidence="1" type="primary">fabH</name>
    <name type="ordered locus">NE1646</name>
</gene>